<dbReference type="EMBL" id="AY007463">
    <property type="protein sequence ID" value="AAG12364.1"/>
    <property type="molecule type" value="Genomic_DNA"/>
</dbReference>
<dbReference type="SMR" id="Q8HS36"/>
<dbReference type="GO" id="GO:0009535">
    <property type="term" value="C:chloroplast thylakoid membrane"/>
    <property type="evidence" value="ECO:0007669"/>
    <property type="project" value="UniProtKB-SubCell"/>
</dbReference>
<dbReference type="GO" id="GO:0009539">
    <property type="term" value="C:photosystem II reaction center"/>
    <property type="evidence" value="ECO:0007669"/>
    <property type="project" value="InterPro"/>
</dbReference>
<dbReference type="GO" id="GO:0015979">
    <property type="term" value="P:photosynthesis"/>
    <property type="evidence" value="ECO:0007669"/>
    <property type="project" value="UniProtKB-UniRule"/>
</dbReference>
<dbReference type="HAMAP" id="MF_00808">
    <property type="entry name" value="PSII_PsbT"/>
    <property type="match status" value="1"/>
</dbReference>
<dbReference type="InterPro" id="IPR001743">
    <property type="entry name" value="PSII_PsbT"/>
</dbReference>
<dbReference type="InterPro" id="IPR037268">
    <property type="entry name" value="PSII_PsbT_sf"/>
</dbReference>
<dbReference type="PANTHER" id="PTHR36411">
    <property type="match status" value="1"/>
</dbReference>
<dbReference type="PANTHER" id="PTHR36411:SF2">
    <property type="entry name" value="PHOTOSYSTEM II REACTION CENTER PROTEIN T"/>
    <property type="match status" value="1"/>
</dbReference>
<dbReference type="Pfam" id="PF01405">
    <property type="entry name" value="PsbT"/>
    <property type="match status" value="1"/>
</dbReference>
<dbReference type="SUPFAM" id="SSF161029">
    <property type="entry name" value="Photosystem II reaction center protein T, PsbT"/>
    <property type="match status" value="1"/>
</dbReference>
<keyword id="KW-0150">Chloroplast</keyword>
<keyword id="KW-0472">Membrane</keyword>
<keyword id="KW-0602">Photosynthesis</keyword>
<keyword id="KW-0604">Photosystem II</keyword>
<keyword id="KW-0934">Plastid</keyword>
<keyword id="KW-0793">Thylakoid</keyword>
<keyword id="KW-0812">Transmembrane</keyword>
<keyword id="KW-1133">Transmembrane helix</keyword>
<name>PSBT_GUNCH</name>
<reference key="1">
    <citation type="submission" date="2000-02" db="EMBL/GenBank/DDBJ databases">
        <authorList>
            <person name="Graham S.W."/>
            <person name="Reeves P.A."/>
            <person name="Burns A."/>
            <person name="Olmstead R.G."/>
        </authorList>
    </citation>
    <scope>NUCLEOTIDE SEQUENCE [GENOMIC DNA]</scope>
</reference>
<feature type="chain" id="PRO_0000217936" description="Photosystem II reaction center protein T">
    <location>
        <begin position="1"/>
        <end position="35"/>
    </location>
</feature>
<feature type="transmembrane region" description="Helical" evidence="1">
    <location>
        <begin position="3"/>
        <end position="23"/>
    </location>
</feature>
<geneLocation type="chloroplast"/>
<organism>
    <name type="scientific">Gunnera chilensis</name>
    <name type="common">Chilean rhubarb</name>
    <dbReference type="NCBI Taxonomy" id="130722"/>
    <lineage>
        <taxon>Eukaryota</taxon>
        <taxon>Viridiplantae</taxon>
        <taxon>Streptophyta</taxon>
        <taxon>Embryophyta</taxon>
        <taxon>Tracheophyta</taxon>
        <taxon>Spermatophyta</taxon>
        <taxon>Magnoliopsida</taxon>
        <taxon>eudicotyledons</taxon>
        <taxon>Gunneridae</taxon>
        <taxon>Gunnerales</taxon>
        <taxon>Gunneraceae</taxon>
        <taxon>Gunnera</taxon>
    </lineage>
</organism>
<accession>Q8HS36</accession>
<protein>
    <recommendedName>
        <fullName evidence="1">Photosystem II reaction center protein T</fullName>
        <shortName evidence="1">PSII-T</shortName>
    </recommendedName>
</protein>
<sequence length="35" mass="4059">MEALVYTFLLVSTLGIIFFAIFFREPPKVPTKKIK</sequence>
<gene>
    <name evidence="1" type="primary">psbT</name>
</gene>
<evidence type="ECO:0000255" key="1">
    <source>
        <dbReference type="HAMAP-Rule" id="MF_00808"/>
    </source>
</evidence>
<proteinExistence type="inferred from homology"/>
<comment type="function">
    <text evidence="1">Found at the monomer-monomer interface of the photosystem II (PS II) dimer, plays a role in assembly and dimerization of PSII. PSII is a light-driven water plastoquinone oxidoreductase, using light energy to abstract electrons from H(2)O, generating a proton gradient subsequently used for ATP formation.</text>
</comment>
<comment type="subunit">
    <text evidence="1">PSII is composed of 1 copy each of membrane proteins PsbA, PsbB, PsbC, PsbD, PsbE, PsbF, PsbH, PsbI, PsbJ, PsbK, PsbL, PsbM, PsbT, PsbY, PsbZ, Psb30/Ycf12, at least 3 peripheral proteins of the oxygen-evolving complex and a large number of cofactors. It forms dimeric complexes.</text>
</comment>
<comment type="subcellular location">
    <subcellularLocation>
        <location evidence="1">Plastid</location>
        <location evidence="1">Chloroplast thylakoid membrane</location>
        <topology evidence="1">Single-pass membrane protein</topology>
    </subcellularLocation>
</comment>
<comment type="similarity">
    <text evidence="1">Belongs to the PsbT family.</text>
</comment>